<sequence length="224" mass="24396">MNSDLALLRLLQLASPGLPVGGFTYSQGLEWAVEAGWVRGVDGFVAWQREQVHDTLACLDWPVLARLYHACQAEDAAAFGHWSRFLLANRETAELRLEEQQRGAALARLLDGWQLGQAPAWRASLELSQLGGMAWLAAHWAIPLRQLALGHGFAWLEGAVMAGVKLVPFGQQAAQTLLRDLGNELPAALDQALGLGDDQLGGGLPLLAIASSRHETQYTRLFRS</sequence>
<dbReference type="EMBL" id="CP000926">
    <property type="protein sequence ID" value="ABY98826.1"/>
    <property type="molecule type" value="Genomic_DNA"/>
</dbReference>
<dbReference type="RefSeq" id="WP_012272559.1">
    <property type="nucleotide sequence ID" value="NC_010322.1"/>
</dbReference>
<dbReference type="SMR" id="B0KUZ4"/>
<dbReference type="KEGG" id="ppg:PputGB1_2932"/>
<dbReference type="eggNOG" id="COG0830">
    <property type="taxonomic scope" value="Bacteria"/>
</dbReference>
<dbReference type="HOGENOM" id="CLU_049215_2_1_6"/>
<dbReference type="Proteomes" id="UP000002157">
    <property type="component" value="Chromosome"/>
</dbReference>
<dbReference type="GO" id="GO:0005737">
    <property type="term" value="C:cytoplasm"/>
    <property type="evidence" value="ECO:0007669"/>
    <property type="project" value="UniProtKB-SubCell"/>
</dbReference>
<dbReference type="GO" id="GO:0016151">
    <property type="term" value="F:nickel cation binding"/>
    <property type="evidence" value="ECO:0007669"/>
    <property type="project" value="UniProtKB-UniRule"/>
</dbReference>
<dbReference type="Gene3D" id="1.10.4190.10">
    <property type="entry name" value="Urease accessory protein UreF"/>
    <property type="match status" value="1"/>
</dbReference>
<dbReference type="HAMAP" id="MF_01385">
    <property type="entry name" value="UreF"/>
    <property type="match status" value="1"/>
</dbReference>
<dbReference type="InterPro" id="IPR002639">
    <property type="entry name" value="UreF"/>
</dbReference>
<dbReference type="InterPro" id="IPR038277">
    <property type="entry name" value="UreF_sf"/>
</dbReference>
<dbReference type="PANTHER" id="PTHR33620">
    <property type="entry name" value="UREASE ACCESSORY PROTEIN F"/>
    <property type="match status" value="1"/>
</dbReference>
<dbReference type="PANTHER" id="PTHR33620:SF1">
    <property type="entry name" value="UREASE ACCESSORY PROTEIN F"/>
    <property type="match status" value="1"/>
</dbReference>
<dbReference type="Pfam" id="PF01730">
    <property type="entry name" value="UreF"/>
    <property type="match status" value="1"/>
</dbReference>
<dbReference type="PIRSF" id="PIRSF009467">
    <property type="entry name" value="Ureas_acces_UreF"/>
    <property type="match status" value="1"/>
</dbReference>
<accession>B0KUZ4</accession>
<gene>
    <name evidence="1" type="primary">ureF</name>
    <name type="ordered locus">PputGB1_2932</name>
</gene>
<comment type="function">
    <text evidence="1">Required for maturation of urease via the functional incorporation of the urease nickel metallocenter.</text>
</comment>
<comment type="subunit">
    <text evidence="1">UreD, UreF and UreG form a complex that acts as a GTP-hydrolysis-dependent molecular chaperone, activating the urease apoprotein by helping to assemble the nickel containing metallocenter of UreC. The UreE protein probably delivers the nickel.</text>
</comment>
<comment type="subcellular location">
    <subcellularLocation>
        <location evidence="1">Cytoplasm</location>
    </subcellularLocation>
</comment>
<comment type="similarity">
    <text evidence="1">Belongs to the UreF family.</text>
</comment>
<organism>
    <name type="scientific">Pseudomonas putida (strain GB-1)</name>
    <dbReference type="NCBI Taxonomy" id="76869"/>
    <lineage>
        <taxon>Bacteria</taxon>
        <taxon>Pseudomonadati</taxon>
        <taxon>Pseudomonadota</taxon>
        <taxon>Gammaproteobacteria</taxon>
        <taxon>Pseudomonadales</taxon>
        <taxon>Pseudomonadaceae</taxon>
        <taxon>Pseudomonas</taxon>
    </lineage>
</organism>
<protein>
    <recommendedName>
        <fullName evidence="1">Urease accessory protein UreF</fullName>
    </recommendedName>
</protein>
<evidence type="ECO:0000255" key="1">
    <source>
        <dbReference type="HAMAP-Rule" id="MF_01385"/>
    </source>
</evidence>
<feature type="chain" id="PRO_0000344152" description="Urease accessory protein UreF">
    <location>
        <begin position="1"/>
        <end position="224"/>
    </location>
</feature>
<keyword id="KW-0143">Chaperone</keyword>
<keyword id="KW-0963">Cytoplasm</keyword>
<keyword id="KW-0996">Nickel insertion</keyword>
<name>UREF_PSEPG</name>
<reference key="1">
    <citation type="submission" date="2008-01" db="EMBL/GenBank/DDBJ databases">
        <title>Complete sequence of Pseudomonas putida GB-1.</title>
        <authorList>
            <consortium name="US DOE Joint Genome Institute"/>
            <person name="Copeland A."/>
            <person name="Lucas S."/>
            <person name="Lapidus A."/>
            <person name="Barry K."/>
            <person name="Glavina del Rio T."/>
            <person name="Dalin E."/>
            <person name="Tice H."/>
            <person name="Pitluck S."/>
            <person name="Bruce D."/>
            <person name="Goodwin L."/>
            <person name="Chertkov O."/>
            <person name="Brettin T."/>
            <person name="Detter J.C."/>
            <person name="Han C."/>
            <person name="Kuske C.R."/>
            <person name="Schmutz J."/>
            <person name="Larimer F."/>
            <person name="Land M."/>
            <person name="Hauser L."/>
            <person name="Kyrpides N."/>
            <person name="Kim E."/>
            <person name="McCarthy J.K."/>
            <person name="Richardson P."/>
        </authorList>
    </citation>
    <scope>NUCLEOTIDE SEQUENCE [LARGE SCALE GENOMIC DNA]</scope>
    <source>
        <strain>GB-1</strain>
    </source>
</reference>
<proteinExistence type="inferred from homology"/>